<proteinExistence type="inferred from homology"/>
<dbReference type="EMBL" id="U23472">
    <property type="protein sequence ID" value="AAC48993.1"/>
    <property type="status" value="ALT_SEQ"/>
    <property type="molecule type" value="Genomic_DNA"/>
</dbReference>
<dbReference type="EMBL" id="Z75302">
    <property type="protein sequence ID" value="CAA99726.1"/>
    <property type="molecule type" value="Genomic_DNA"/>
</dbReference>
<dbReference type="EMBL" id="AY558031">
    <property type="protein sequence ID" value="AAS56357.1"/>
    <property type="molecule type" value="Genomic_DNA"/>
</dbReference>
<dbReference type="EMBL" id="BK006948">
    <property type="protein sequence ID" value="DAA11152.1"/>
    <property type="molecule type" value="Genomic_DNA"/>
</dbReference>
<dbReference type="PIR" id="S67307">
    <property type="entry name" value="S67307"/>
</dbReference>
<dbReference type="RefSeq" id="NP_015039.3">
    <molecule id="P0CE86-1"/>
    <property type="nucleotide sequence ID" value="NM_001183814.3"/>
</dbReference>
<dbReference type="RefSeq" id="NP_015041.1">
    <molecule id="P0CE86-1"/>
    <property type="nucleotide sequence ID" value="NM_001184096.1"/>
</dbReference>
<dbReference type="BioGRID" id="34774">
    <property type="interactions" value="6"/>
</dbReference>
<dbReference type="BioGRID" id="35933">
    <property type="interactions" value="41"/>
</dbReference>
<dbReference type="FunCoup" id="P0CE86">
    <property type="interactions" value="43"/>
</dbReference>
<dbReference type="STRING" id="4932.YOR394W"/>
<dbReference type="PaxDb" id="4932-YOR394W"/>
<dbReference type="EnsemblFungi" id="YMR325W_mRNA">
    <property type="protein sequence ID" value="YMR325W"/>
    <property type="gene ID" value="YMR325W"/>
</dbReference>
<dbReference type="EnsemblFungi" id="YOR394W_mRNA">
    <molecule id="P0CE86-1"/>
    <property type="protein sequence ID" value="YOR394W"/>
    <property type="gene ID" value="YOR394W"/>
</dbReference>
<dbReference type="EnsemblFungi" id="YPL282C_mRNA">
    <molecule id="P0CE86-1"/>
    <property type="protein sequence ID" value="YPL282C"/>
    <property type="gene ID" value="YPL282C"/>
</dbReference>
<dbReference type="GeneID" id="854576"/>
<dbReference type="KEGG" id="sce:YOR394W"/>
<dbReference type="KEGG" id="sce:YPL282C"/>
<dbReference type="AGR" id="SGD:S000005921"/>
<dbReference type="SGD" id="S000005921">
    <property type="gene designation" value="PAU21"/>
</dbReference>
<dbReference type="VEuPathDB" id="FungiDB:YOR394W"/>
<dbReference type="VEuPathDB" id="FungiDB:YPL282C"/>
<dbReference type="eggNOG" id="ENOG502SR1B">
    <property type="taxonomic scope" value="Eukaryota"/>
</dbReference>
<dbReference type="HOGENOM" id="CLU_136376_0_0_1"/>
<dbReference type="InParanoid" id="P0CE86"/>
<dbReference type="OMA" id="LKMQMAN"/>
<dbReference type="OrthoDB" id="4053771at2759"/>
<dbReference type="BioCyc" id="YEAST:G3O-33853-MONOMER"/>
<dbReference type="PRO" id="PR:P0CE86"/>
<dbReference type="Proteomes" id="UP000002311">
    <property type="component" value="Chromosome XV"/>
</dbReference>
<dbReference type="RNAct" id="P0CE86">
    <property type="molecule type" value="protein"/>
</dbReference>
<dbReference type="ExpressionAtlas" id="P0CE86">
    <property type="expression patterns" value="baseline"/>
</dbReference>
<dbReference type="GO" id="GO:0005829">
    <property type="term" value="C:cytosol"/>
    <property type="evidence" value="ECO:0007005"/>
    <property type="project" value="SGD"/>
</dbReference>
<dbReference type="GO" id="GO:0009277">
    <property type="term" value="C:fungal-type cell wall"/>
    <property type="evidence" value="ECO:0000318"/>
    <property type="project" value="GO_Central"/>
</dbReference>
<dbReference type="GO" id="GO:0005199">
    <property type="term" value="F:structural constituent of cell wall"/>
    <property type="evidence" value="ECO:0000318"/>
    <property type="project" value="GO_Central"/>
</dbReference>
<dbReference type="GO" id="GO:0031505">
    <property type="term" value="P:fungal-type cell wall organization"/>
    <property type="evidence" value="ECO:0000318"/>
    <property type="project" value="GO_Central"/>
</dbReference>
<dbReference type="InterPro" id="IPR000992">
    <property type="entry name" value="SRP1_TIP1"/>
</dbReference>
<dbReference type="InterPro" id="IPR050788">
    <property type="entry name" value="Yeast_SRP1/TIP1_CWP"/>
</dbReference>
<dbReference type="PANTHER" id="PTHR31002:SF34">
    <property type="entry name" value="CELL WALL PROTEIN CWP1-RELATED"/>
    <property type="match status" value="1"/>
</dbReference>
<dbReference type="PANTHER" id="PTHR31002">
    <property type="entry name" value="SERIPAUPERIN"/>
    <property type="match status" value="1"/>
</dbReference>
<dbReference type="Pfam" id="PF00660">
    <property type="entry name" value="SRP1_TIP1"/>
    <property type="match status" value="1"/>
</dbReference>
<dbReference type="PROSITE" id="PS00724">
    <property type="entry name" value="SRP1_TIP1"/>
    <property type="match status" value="1"/>
</dbReference>
<name>PAU21_YEAST</name>
<organism>
    <name type="scientific">Saccharomyces cerevisiae (strain ATCC 204508 / S288c)</name>
    <name type="common">Baker's yeast</name>
    <dbReference type="NCBI Taxonomy" id="559292"/>
    <lineage>
        <taxon>Eukaryota</taxon>
        <taxon>Fungi</taxon>
        <taxon>Dikarya</taxon>
        <taxon>Ascomycota</taxon>
        <taxon>Saccharomycotina</taxon>
        <taxon>Saccharomycetes</taxon>
        <taxon>Saccharomycetales</taxon>
        <taxon>Saccharomycetaceae</taxon>
        <taxon>Saccharomyces</taxon>
    </lineage>
</organism>
<gene>
    <name type="primary">PAU21</name>
    <name type="ordered locus">YOR394W</name>
</gene>
<reference key="1">
    <citation type="journal article" date="1995" name="Yeast">
        <title>Sequence analysis of the right end of chromosome XV in Saccharomyces cerevisiae: an insight into the structural and functional significance of sub-telomeric repeat sequences.</title>
        <authorList>
            <person name="Pryde F.E."/>
            <person name="Huckle T.C."/>
            <person name="Louis E.J."/>
        </authorList>
    </citation>
    <scope>NUCLEOTIDE SEQUENCE [GENOMIC DNA]</scope>
    <source>
        <strain>ATCC 90839 / S288c / YP1</strain>
    </source>
</reference>
<reference key="2">
    <citation type="journal article" date="1997" name="Nature">
        <title>The nucleotide sequence of Saccharomyces cerevisiae chromosome XV.</title>
        <authorList>
            <person name="Dujon B."/>
            <person name="Albermann K."/>
            <person name="Aldea M."/>
            <person name="Alexandraki D."/>
            <person name="Ansorge W."/>
            <person name="Arino J."/>
            <person name="Benes V."/>
            <person name="Bohn C."/>
            <person name="Bolotin-Fukuhara M."/>
            <person name="Bordonne R."/>
            <person name="Boyer J."/>
            <person name="Camasses A."/>
            <person name="Casamayor A."/>
            <person name="Casas C."/>
            <person name="Cheret G."/>
            <person name="Cziepluch C."/>
            <person name="Daignan-Fornier B."/>
            <person name="Dang V.-D."/>
            <person name="de Haan M."/>
            <person name="Delius H."/>
            <person name="Durand P."/>
            <person name="Fairhead C."/>
            <person name="Feldmann H."/>
            <person name="Gaillon L."/>
            <person name="Galisson F."/>
            <person name="Gamo F.-J."/>
            <person name="Gancedo C."/>
            <person name="Goffeau A."/>
            <person name="Goulding S.E."/>
            <person name="Grivell L.A."/>
            <person name="Habbig B."/>
            <person name="Hand N.J."/>
            <person name="Hani J."/>
            <person name="Hattenhorst U."/>
            <person name="Hebling U."/>
            <person name="Hernando Y."/>
            <person name="Herrero E."/>
            <person name="Heumann K."/>
            <person name="Hiesel R."/>
            <person name="Hilger F."/>
            <person name="Hofmann B."/>
            <person name="Hollenberg C.P."/>
            <person name="Hughes B."/>
            <person name="Jauniaux J.-C."/>
            <person name="Kalogeropoulos A."/>
            <person name="Katsoulou C."/>
            <person name="Kordes E."/>
            <person name="Lafuente M.J."/>
            <person name="Landt O."/>
            <person name="Louis E.J."/>
            <person name="Maarse A.C."/>
            <person name="Madania A."/>
            <person name="Mannhaupt G."/>
            <person name="Marck C."/>
            <person name="Martin R.P."/>
            <person name="Mewes H.-W."/>
            <person name="Michaux G."/>
            <person name="Paces V."/>
            <person name="Parle-McDermott A.G."/>
            <person name="Pearson B.M."/>
            <person name="Perrin A."/>
            <person name="Pettersson B."/>
            <person name="Poch O."/>
            <person name="Pohl T.M."/>
            <person name="Poirey R."/>
            <person name="Portetelle D."/>
            <person name="Pujol A."/>
            <person name="Purnelle B."/>
            <person name="Ramezani Rad M."/>
            <person name="Rechmann S."/>
            <person name="Schwager C."/>
            <person name="Schweizer M."/>
            <person name="Sor F."/>
            <person name="Sterky F."/>
            <person name="Tarassov I.A."/>
            <person name="Teodoru C."/>
            <person name="Tettelin H."/>
            <person name="Thierry A."/>
            <person name="Tobiasch E."/>
            <person name="Tzermia M."/>
            <person name="Uhlen M."/>
            <person name="Unseld M."/>
            <person name="Valens M."/>
            <person name="Vandenbol M."/>
            <person name="Vetter I."/>
            <person name="Vlcek C."/>
            <person name="Voet M."/>
            <person name="Volckaert G."/>
            <person name="Voss H."/>
            <person name="Wambutt R."/>
            <person name="Wedler H."/>
            <person name="Wiemann S."/>
            <person name="Winsor B."/>
            <person name="Wolfe K.H."/>
            <person name="Zollner A."/>
            <person name="Zumstein E."/>
            <person name="Kleine K."/>
        </authorList>
    </citation>
    <scope>NUCLEOTIDE SEQUENCE [LARGE SCALE GENOMIC DNA]</scope>
    <source>
        <strain>ATCC 204508 / S288c</strain>
    </source>
</reference>
<reference key="3">
    <citation type="journal article" date="2014" name="G3 (Bethesda)">
        <title>The reference genome sequence of Saccharomyces cerevisiae: Then and now.</title>
        <authorList>
            <person name="Engel S.R."/>
            <person name="Dietrich F.S."/>
            <person name="Fisk D.G."/>
            <person name="Binkley G."/>
            <person name="Balakrishnan R."/>
            <person name="Costanzo M.C."/>
            <person name="Dwight S.S."/>
            <person name="Hitz B.C."/>
            <person name="Karra K."/>
            <person name="Nash R.S."/>
            <person name="Weng S."/>
            <person name="Wong E.D."/>
            <person name="Lloyd P."/>
            <person name="Skrzypek M.S."/>
            <person name="Miyasato S.R."/>
            <person name="Simison M."/>
            <person name="Cherry J.M."/>
        </authorList>
    </citation>
    <scope>GENOME REANNOTATION</scope>
    <source>
        <strain>ATCC 204508 / S288c</strain>
    </source>
</reference>
<reference key="4">
    <citation type="journal article" date="2007" name="Genome Res.">
        <title>Approaching a complete repository of sequence-verified protein-encoding clones for Saccharomyces cerevisiae.</title>
        <authorList>
            <person name="Hu Y."/>
            <person name="Rolfs A."/>
            <person name="Bhullar B."/>
            <person name="Murthy T.V.S."/>
            <person name="Zhu C."/>
            <person name="Berger M.F."/>
            <person name="Camargo A.A."/>
            <person name="Kelley F."/>
            <person name="McCarron S."/>
            <person name="Jepson D."/>
            <person name="Richardson A."/>
            <person name="Raphael J."/>
            <person name="Moreira D."/>
            <person name="Taycher E."/>
            <person name="Zuo D."/>
            <person name="Mohr S."/>
            <person name="Kane M.F."/>
            <person name="Williamson J."/>
            <person name="Simpson A.J.G."/>
            <person name="Bulyk M.L."/>
            <person name="Harlow E."/>
            <person name="Marsischky G."/>
            <person name="Kolodner R.D."/>
            <person name="LaBaer J."/>
        </authorList>
    </citation>
    <scope>NUCLEOTIDE SEQUENCE [GENOMIC DNA]</scope>
</reference>
<reference key="5">
    <citation type="journal article" date="2009" name="Microbiology">
        <title>Functional analyses of PAU genes in Saccharomyces cerevisiae.</title>
        <authorList>
            <person name="Luo Z."/>
            <person name="van Vuuren H.J."/>
        </authorList>
    </citation>
    <scope>ALTERNATIVE INITIATION</scope>
    <source>
        <strain>ATCC 201389 / BY4742</strain>
    </source>
</reference>
<sequence length="164" mass="17714">MTNEGIGINRDTSTICLREYVFIHFFPVKLISALTNKTNTMVKLTSIAAGVAAIAAGVAAAPATTTLSPSDERVNLVELGVYVSDIRAHLAQYYLFQAAHPTETYPVEIAEAVFNYGDFTTMLTGIPAEQVTRVITGVPWYSTRLRPAISSALSKDGIYTAIPK</sequence>
<feature type="chain" id="PRO_0000392931" description="Seripauperin-21">
    <location>
        <begin position="1"/>
        <end position="164"/>
    </location>
</feature>
<feature type="splice variant" id="VSP_038855" description="In isoform 2." evidence="1">
    <location>
        <begin position="1"/>
        <end position="40"/>
    </location>
</feature>
<feature type="sequence conflict" description="In Ref. 1; AAC48993." evidence="1" ref="1">
    <original>HFF</original>
    <variation>PSL</variation>
    <location>
        <begin position="24"/>
        <end position="26"/>
    </location>
</feature>
<accession>P0CE86</accession>
<accession>D6W386</accession>
<accession>P42221</accession>
<accession>Q92395</accession>
<comment type="alternative products">
    <event type="alternative initiation"/>
    <isoform>
        <id>P0CE86-1</id>
        <name>1</name>
        <sequence type="displayed"/>
    </isoform>
    <isoform>
        <id>P0CE86-2</id>
        <name>2</name>
        <sequence type="described" ref="VSP_038855"/>
    </isoform>
</comment>
<comment type="miscellaneous">
    <molecule>Isoform 2</molecule>
    <text evidence="1">Produced by alternative initiation at Met-41 of isoform 1. Major isoform.</text>
</comment>
<comment type="similarity">
    <text evidence="1">Belongs to the SRP1/TIP1 family. Seripauperin subfamily.</text>
</comment>
<comment type="sequence caution" evidence="1">
    <conflict type="erroneous termination">
        <sequence resource="EMBL-CDS" id="AAC48993"/>
    </conflict>
    <text>Truncated C-terminus.</text>
</comment>
<protein>
    <recommendedName>
        <fullName>Seripauperin-21</fullName>
    </recommendedName>
</protein>
<keyword id="KW-0024">Alternative initiation</keyword>
<keyword id="KW-1185">Reference proteome</keyword>
<evidence type="ECO:0000305" key="1"/>